<proteinExistence type="inferred from homology"/>
<keyword id="KW-0119">Carbohydrate metabolism</keyword>
<keyword id="KW-0413">Isomerase</keyword>
<keyword id="KW-0521">NADP</keyword>
<gene>
    <name evidence="1" type="primary">hldD</name>
    <name type="ordered locus">SeAg_B3928</name>
</gene>
<name>HLDD_SALA4</name>
<sequence>MIIVTGGAGFIGSNIVKALNDKGITDILVVDNLKDGTKFVNLVDLNIADYMDKEDFLIQIMSGEELGDIEAIFHEGACSSTTEWDGKYMMDNNYQYSKELLHYCLEREIPFLYASSAATYGGRTSDFIESREYEKPLNVYGYSKFLFDEYVRQILPEANSQIVGFRYFNVYGPREGHKGSMASVAFHLNTQLNNGESPKLFEGSENFKRDFVYVGDVAAVNLWFLESGKSGIFNLGTGRAESFQAVADATLAYHKKGSIEYIPFPDKLKGRYQAFTQADLTNLRNAGYDKPFKTVAEGVTEYMAWLNRDA</sequence>
<reference key="1">
    <citation type="journal article" date="2011" name="J. Bacteriol.">
        <title>Comparative genomics of 28 Salmonella enterica isolates: evidence for CRISPR-mediated adaptive sublineage evolution.</title>
        <authorList>
            <person name="Fricke W.F."/>
            <person name="Mammel M.K."/>
            <person name="McDermott P.F."/>
            <person name="Tartera C."/>
            <person name="White D.G."/>
            <person name="Leclerc J.E."/>
            <person name="Ravel J."/>
            <person name="Cebula T.A."/>
        </authorList>
    </citation>
    <scope>NUCLEOTIDE SEQUENCE [LARGE SCALE GENOMIC DNA]</scope>
    <source>
        <strain>SL483</strain>
    </source>
</reference>
<protein>
    <recommendedName>
        <fullName evidence="1">ADP-L-glycero-D-manno-heptose-6-epimerase</fullName>
        <ecNumber evidence="1">5.1.3.20</ecNumber>
    </recommendedName>
    <alternativeName>
        <fullName evidence="1">ADP-L-glycero-beta-D-manno-heptose-6-epimerase</fullName>
        <shortName evidence="1">ADP-glyceromanno-heptose 6-epimerase</shortName>
        <shortName evidence="1">ADP-hep 6-epimerase</shortName>
        <shortName evidence="1">AGME</shortName>
    </alternativeName>
</protein>
<feature type="chain" id="PRO_1000190408" description="ADP-L-glycero-D-manno-heptose-6-epimerase">
    <location>
        <begin position="1"/>
        <end position="310"/>
    </location>
</feature>
<feature type="active site" description="Proton acceptor" evidence="1">
    <location>
        <position position="140"/>
    </location>
</feature>
<feature type="active site" description="Proton acceptor" evidence="1">
    <location>
        <position position="178"/>
    </location>
</feature>
<feature type="binding site" evidence="1">
    <location>
        <begin position="10"/>
        <end position="11"/>
    </location>
    <ligand>
        <name>NADP(+)</name>
        <dbReference type="ChEBI" id="CHEBI:58349"/>
    </ligand>
</feature>
<feature type="binding site" evidence="1">
    <location>
        <begin position="31"/>
        <end position="32"/>
    </location>
    <ligand>
        <name>NADP(+)</name>
        <dbReference type="ChEBI" id="CHEBI:58349"/>
    </ligand>
</feature>
<feature type="binding site" evidence="1">
    <location>
        <position position="38"/>
    </location>
    <ligand>
        <name>NADP(+)</name>
        <dbReference type="ChEBI" id="CHEBI:58349"/>
    </ligand>
</feature>
<feature type="binding site" evidence="1">
    <location>
        <position position="53"/>
    </location>
    <ligand>
        <name>NADP(+)</name>
        <dbReference type="ChEBI" id="CHEBI:58349"/>
    </ligand>
</feature>
<feature type="binding site" evidence="1">
    <location>
        <begin position="75"/>
        <end position="79"/>
    </location>
    <ligand>
        <name>NADP(+)</name>
        <dbReference type="ChEBI" id="CHEBI:58349"/>
    </ligand>
</feature>
<feature type="binding site" evidence="1">
    <location>
        <position position="92"/>
    </location>
    <ligand>
        <name>NADP(+)</name>
        <dbReference type="ChEBI" id="CHEBI:58349"/>
    </ligand>
</feature>
<feature type="binding site" evidence="1">
    <location>
        <position position="144"/>
    </location>
    <ligand>
        <name>NADP(+)</name>
        <dbReference type="ChEBI" id="CHEBI:58349"/>
    </ligand>
</feature>
<feature type="binding site" evidence="1">
    <location>
        <position position="169"/>
    </location>
    <ligand>
        <name>substrate</name>
    </ligand>
</feature>
<feature type="binding site" evidence="1">
    <location>
        <position position="170"/>
    </location>
    <ligand>
        <name>NADP(+)</name>
        <dbReference type="ChEBI" id="CHEBI:58349"/>
    </ligand>
</feature>
<feature type="binding site" evidence="1">
    <location>
        <position position="178"/>
    </location>
    <ligand>
        <name>NADP(+)</name>
        <dbReference type="ChEBI" id="CHEBI:58349"/>
    </ligand>
</feature>
<feature type="binding site" evidence="1">
    <location>
        <position position="180"/>
    </location>
    <ligand>
        <name>substrate</name>
    </ligand>
</feature>
<feature type="binding site" evidence="1">
    <location>
        <position position="187"/>
    </location>
    <ligand>
        <name>substrate</name>
    </ligand>
</feature>
<feature type="binding site" evidence="1">
    <location>
        <begin position="201"/>
        <end position="204"/>
    </location>
    <ligand>
        <name>substrate</name>
    </ligand>
</feature>
<feature type="binding site" evidence="1">
    <location>
        <position position="209"/>
    </location>
    <ligand>
        <name>substrate</name>
    </ligand>
</feature>
<feature type="binding site" evidence="1">
    <location>
        <position position="272"/>
    </location>
    <ligand>
        <name>substrate</name>
    </ligand>
</feature>
<dbReference type="EC" id="5.1.3.20" evidence="1"/>
<dbReference type="EMBL" id="CP001138">
    <property type="protein sequence ID" value="ACH51194.1"/>
    <property type="molecule type" value="Genomic_DNA"/>
</dbReference>
<dbReference type="SMR" id="B5EXC5"/>
<dbReference type="KEGG" id="sea:SeAg_B3928"/>
<dbReference type="HOGENOM" id="CLU_007383_1_3_6"/>
<dbReference type="UniPathway" id="UPA00356">
    <property type="reaction ID" value="UER00440"/>
</dbReference>
<dbReference type="Proteomes" id="UP000008819">
    <property type="component" value="Chromosome"/>
</dbReference>
<dbReference type="GO" id="GO:0008712">
    <property type="term" value="F:ADP-glyceromanno-heptose 6-epimerase activity"/>
    <property type="evidence" value="ECO:0007669"/>
    <property type="project" value="UniProtKB-UniRule"/>
</dbReference>
<dbReference type="GO" id="GO:0050661">
    <property type="term" value="F:NADP binding"/>
    <property type="evidence" value="ECO:0007669"/>
    <property type="project" value="InterPro"/>
</dbReference>
<dbReference type="GO" id="GO:0097171">
    <property type="term" value="P:ADP-L-glycero-beta-D-manno-heptose biosynthetic process"/>
    <property type="evidence" value="ECO:0007669"/>
    <property type="project" value="UniProtKB-UniPathway"/>
</dbReference>
<dbReference type="GO" id="GO:0005975">
    <property type="term" value="P:carbohydrate metabolic process"/>
    <property type="evidence" value="ECO:0007669"/>
    <property type="project" value="UniProtKB-UniRule"/>
</dbReference>
<dbReference type="CDD" id="cd05248">
    <property type="entry name" value="ADP_GME_SDR_e"/>
    <property type="match status" value="1"/>
</dbReference>
<dbReference type="Gene3D" id="3.40.50.720">
    <property type="entry name" value="NAD(P)-binding Rossmann-like Domain"/>
    <property type="match status" value="1"/>
</dbReference>
<dbReference type="Gene3D" id="3.90.25.10">
    <property type="entry name" value="UDP-galactose 4-epimerase, domain 1"/>
    <property type="match status" value="1"/>
</dbReference>
<dbReference type="HAMAP" id="MF_01601">
    <property type="entry name" value="Heptose_epimerase"/>
    <property type="match status" value="1"/>
</dbReference>
<dbReference type="InterPro" id="IPR001509">
    <property type="entry name" value="Epimerase_deHydtase"/>
</dbReference>
<dbReference type="InterPro" id="IPR011912">
    <property type="entry name" value="Heptose_epim"/>
</dbReference>
<dbReference type="InterPro" id="IPR036291">
    <property type="entry name" value="NAD(P)-bd_dom_sf"/>
</dbReference>
<dbReference type="NCBIfam" id="TIGR02197">
    <property type="entry name" value="heptose_epim"/>
    <property type="match status" value="1"/>
</dbReference>
<dbReference type="NCBIfam" id="NF008360">
    <property type="entry name" value="PRK11150.1"/>
    <property type="match status" value="1"/>
</dbReference>
<dbReference type="PANTHER" id="PTHR43103:SF3">
    <property type="entry name" value="ADP-L-GLYCERO-D-MANNO-HEPTOSE-6-EPIMERASE"/>
    <property type="match status" value="1"/>
</dbReference>
<dbReference type="PANTHER" id="PTHR43103">
    <property type="entry name" value="NUCLEOSIDE-DIPHOSPHATE-SUGAR EPIMERASE"/>
    <property type="match status" value="1"/>
</dbReference>
<dbReference type="Pfam" id="PF01370">
    <property type="entry name" value="Epimerase"/>
    <property type="match status" value="1"/>
</dbReference>
<dbReference type="SUPFAM" id="SSF51735">
    <property type="entry name" value="NAD(P)-binding Rossmann-fold domains"/>
    <property type="match status" value="1"/>
</dbReference>
<accession>B5EXC5</accession>
<organism>
    <name type="scientific">Salmonella agona (strain SL483)</name>
    <dbReference type="NCBI Taxonomy" id="454166"/>
    <lineage>
        <taxon>Bacteria</taxon>
        <taxon>Pseudomonadati</taxon>
        <taxon>Pseudomonadota</taxon>
        <taxon>Gammaproteobacteria</taxon>
        <taxon>Enterobacterales</taxon>
        <taxon>Enterobacteriaceae</taxon>
        <taxon>Salmonella</taxon>
    </lineage>
</organism>
<evidence type="ECO:0000255" key="1">
    <source>
        <dbReference type="HAMAP-Rule" id="MF_01601"/>
    </source>
</evidence>
<comment type="function">
    <text evidence="1">Catalyzes the interconversion between ADP-D-glycero-beta-D-manno-heptose and ADP-L-glycero-beta-D-manno-heptose via an epimerization at carbon 6 of the heptose.</text>
</comment>
<comment type="catalytic activity">
    <reaction evidence="1">
        <text>ADP-D-glycero-beta-D-manno-heptose = ADP-L-glycero-beta-D-manno-heptose</text>
        <dbReference type="Rhea" id="RHEA:17577"/>
        <dbReference type="ChEBI" id="CHEBI:59967"/>
        <dbReference type="ChEBI" id="CHEBI:61506"/>
        <dbReference type="EC" id="5.1.3.20"/>
    </reaction>
</comment>
<comment type="cofactor">
    <cofactor evidence="1">
        <name>NADP(+)</name>
        <dbReference type="ChEBI" id="CHEBI:58349"/>
    </cofactor>
    <text evidence="1">Binds 1 NADP(+) per subunit.</text>
</comment>
<comment type="pathway">
    <text evidence="1">Nucleotide-sugar biosynthesis; ADP-L-glycero-beta-D-manno-heptose biosynthesis; ADP-L-glycero-beta-D-manno-heptose from D-glycero-beta-D-manno-heptose 7-phosphate: step 4/4.</text>
</comment>
<comment type="subunit">
    <text evidence="1">Homopentamer.</text>
</comment>
<comment type="domain">
    <text evidence="1">Contains a large N-terminal NADP-binding domain, and a smaller C-terminal substrate-binding domain.</text>
</comment>
<comment type="similarity">
    <text evidence="1">Belongs to the NAD(P)-dependent epimerase/dehydratase family. HldD subfamily.</text>
</comment>